<proteinExistence type="inferred from homology"/>
<gene>
    <name evidence="1" type="primary">nadK</name>
    <name type="ordered locus">LSEI_0902</name>
</gene>
<sequence>MRVTVFHNSIPASITAAQKLTKLLKSGHFELDERHPEVVVTIGGDGTLLSAFHRYADQLNSIRFIGVHTGHLGFYTDWRDFEIEDLVIALKEDSGQSVSYPLLDVQATYADATSAHYLALNESTLKRLNGTMRTEVYIKGDFFESFRGDGLCVSTPTGSTAYSKSNGGAVIHPRLDALQMTEIASINNRVFRTLSSPIITAPDEWVTLEPTGRDDYVMTVDQFVINPPTIKQIRYKIAKERIHFARYRHMHFWDRVEDAFIGAKH</sequence>
<name>NADK_LACP3</name>
<protein>
    <recommendedName>
        <fullName evidence="1">NAD kinase</fullName>
        <ecNumber evidence="1">2.7.1.23</ecNumber>
    </recommendedName>
    <alternativeName>
        <fullName evidence="1">ATP-dependent NAD kinase</fullName>
    </alternativeName>
</protein>
<reference key="1">
    <citation type="journal article" date="2006" name="Proc. Natl. Acad. Sci. U.S.A.">
        <title>Comparative genomics of the lactic acid bacteria.</title>
        <authorList>
            <person name="Makarova K.S."/>
            <person name="Slesarev A."/>
            <person name="Wolf Y.I."/>
            <person name="Sorokin A."/>
            <person name="Mirkin B."/>
            <person name="Koonin E.V."/>
            <person name="Pavlov A."/>
            <person name="Pavlova N."/>
            <person name="Karamychev V."/>
            <person name="Polouchine N."/>
            <person name="Shakhova V."/>
            <person name="Grigoriev I."/>
            <person name="Lou Y."/>
            <person name="Rohksar D."/>
            <person name="Lucas S."/>
            <person name="Huang K."/>
            <person name="Goodstein D.M."/>
            <person name="Hawkins T."/>
            <person name="Plengvidhya V."/>
            <person name="Welker D."/>
            <person name="Hughes J."/>
            <person name="Goh Y."/>
            <person name="Benson A."/>
            <person name="Baldwin K."/>
            <person name="Lee J.-H."/>
            <person name="Diaz-Muniz I."/>
            <person name="Dosti B."/>
            <person name="Smeianov V."/>
            <person name="Wechter W."/>
            <person name="Barabote R."/>
            <person name="Lorca G."/>
            <person name="Altermann E."/>
            <person name="Barrangou R."/>
            <person name="Ganesan B."/>
            <person name="Xie Y."/>
            <person name="Rawsthorne H."/>
            <person name="Tamir D."/>
            <person name="Parker C."/>
            <person name="Breidt F."/>
            <person name="Broadbent J.R."/>
            <person name="Hutkins R."/>
            <person name="O'Sullivan D."/>
            <person name="Steele J."/>
            <person name="Unlu G."/>
            <person name="Saier M.H. Jr."/>
            <person name="Klaenhammer T."/>
            <person name="Richardson P."/>
            <person name="Kozyavkin S."/>
            <person name="Weimer B.C."/>
            <person name="Mills D.A."/>
        </authorList>
    </citation>
    <scope>NUCLEOTIDE SEQUENCE [LARGE SCALE GENOMIC DNA]</scope>
    <source>
        <strain>ATCC 334 / BCRC 17002 / CCUG 31169 / CIP 107868 / KCTC 3260 / NRRL B-441</strain>
    </source>
</reference>
<feature type="chain" id="PRO_1000059870" description="NAD kinase">
    <location>
        <begin position="1"/>
        <end position="265"/>
    </location>
</feature>
<feature type="active site" description="Proton acceptor" evidence="1">
    <location>
        <position position="45"/>
    </location>
</feature>
<feature type="binding site" evidence="1">
    <location>
        <begin position="45"/>
        <end position="46"/>
    </location>
    <ligand>
        <name>NAD(+)</name>
        <dbReference type="ChEBI" id="CHEBI:57540"/>
    </ligand>
</feature>
<feature type="binding site" evidence="1">
    <location>
        <begin position="121"/>
        <end position="122"/>
    </location>
    <ligand>
        <name>NAD(+)</name>
        <dbReference type="ChEBI" id="CHEBI:57540"/>
    </ligand>
</feature>
<feature type="binding site" evidence="1">
    <location>
        <position position="147"/>
    </location>
    <ligand>
        <name>NAD(+)</name>
        <dbReference type="ChEBI" id="CHEBI:57540"/>
    </ligand>
</feature>
<feature type="binding site" evidence="1">
    <location>
        <position position="149"/>
    </location>
    <ligand>
        <name>NAD(+)</name>
        <dbReference type="ChEBI" id="CHEBI:57540"/>
    </ligand>
</feature>
<feature type="binding site" evidence="1">
    <location>
        <begin position="160"/>
        <end position="165"/>
    </location>
    <ligand>
        <name>NAD(+)</name>
        <dbReference type="ChEBI" id="CHEBI:57540"/>
    </ligand>
</feature>
<feature type="binding site" evidence="1">
    <location>
        <position position="184"/>
    </location>
    <ligand>
        <name>NAD(+)</name>
        <dbReference type="ChEBI" id="CHEBI:57540"/>
    </ligand>
</feature>
<feature type="binding site" evidence="1">
    <location>
        <position position="222"/>
    </location>
    <ligand>
        <name>NAD(+)</name>
        <dbReference type="ChEBI" id="CHEBI:57540"/>
    </ligand>
</feature>
<keyword id="KW-0067">ATP-binding</keyword>
<keyword id="KW-0963">Cytoplasm</keyword>
<keyword id="KW-0418">Kinase</keyword>
<keyword id="KW-0520">NAD</keyword>
<keyword id="KW-0521">NADP</keyword>
<keyword id="KW-0547">Nucleotide-binding</keyword>
<keyword id="KW-1185">Reference proteome</keyword>
<keyword id="KW-0808">Transferase</keyword>
<accession>Q03AS0</accession>
<evidence type="ECO:0000255" key="1">
    <source>
        <dbReference type="HAMAP-Rule" id="MF_00361"/>
    </source>
</evidence>
<organism>
    <name type="scientific">Lacticaseibacillus paracasei (strain ATCC 334 / BCRC 17002 / CCUG 31169 / CIP 107868 / KCTC 3260 / NRRL B-441)</name>
    <name type="common">Lactobacillus paracasei</name>
    <dbReference type="NCBI Taxonomy" id="321967"/>
    <lineage>
        <taxon>Bacteria</taxon>
        <taxon>Bacillati</taxon>
        <taxon>Bacillota</taxon>
        <taxon>Bacilli</taxon>
        <taxon>Lactobacillales</taxon>
        <taxon>Lactobacillaceae</taxon>
        <taxon>Lacticaseibacillus</taxon>
    </lineage>
</organism>
<dbReference type="EC" id="2.7.1.23" evidence="1"/>
<dbReference type="EMBL" id="CP000423">
    <property type="protein sequence ID" value="ABJ69702.1"/>
    <property type="molecule type" value="Genomic_DNA"/>
</dbReference>
<dbReference type="RefSeq" id="WP_003564146.1">
    <property type="nucleotide sequence ID" value="NC_008526.1"/>
</dbReference>
<dbReference type="RefSeq" id="YP_806144.1">
    <property type="nucleotide sequence ID" value="NC_008526.1"/>
</dbReference>
<dbReference type="SMR" id="Q03AS0"/>
<dbReference type="STRING" id="321967.LSEI_0902"/>
<dbReference type="PaxDb" id="321967-LSEI_0902"/>
<dbReference type="KEGG" id="lca:LSEI_0902"/>
<dbReference type="PATRIC" id="fig|321967.11.peg.871"/>
<dbReference type="HOGENOM" id="CLU_008831_0_3_9"/>
<dbReference type="Proteomes" id="UP000001651">
    <property type="component" value="Chromosome"/>
</dbReference>
<dbReference type="GO" id="GO:0005737">
    <property type="term" value="C:cytoplasm"/>
    <property type="evidence" value="ECO:0007669"/>
    <property type="project" value="UniProtKB-SubCell"/>
</dbReference>
<dbReference type="GO" id="GO:0005524">
    <property type="term" value="F:ATP binding"/>
    <property type="evidence" value="ECO:0007669"/>
    <property type="project" value="UniProtKB-KW"/>
</dbReference>
<dbReference type="GO" id="GO:0046872">
    <property type="term" value="F:metal ion binding"/>
    <property type="evidence" value="ECO:0007669"/>
    <property type="project" value="UniProtKB-UniRule"/>
</dbReference>
<dbReference type="GO" id="GO:0051287">
    <property type="term" value="F:NAD binding"/>
    <property type="evidence" value="ECO:0007669"/>
    <property type="project" value="UniProtKB-ARBA"/>
</dbReference>
<dbReference type="GO" id="GO:0003951">
    <property type="term" value="F:NAD+ kinase activity"/>
    <property type="evidence" value="ECO:0007669"/>
    <property type="project" value="UniProtKB-UniRule"/>
</dbReference>
<dbReference type="GO" id="GO:0019674">
    <property type="term" value="P:NAD metabolic process"/>
    <property type="evidence" value="ECO:0007669"/>
    <property type="project" value="InterPro"/>
</dbReference>
<dbReference type="GO" id="GO:0006741">
    <property type="term" value="P:NADP biosynthetic process"/>
    <property type="evidence" value="ECO:0007669"/>
    <property type="project" value="UniProtKB-UniRule"/>
</dbReference>
<dbReference type="Gene3D" id="3.40.50.10330">
    <property type="entry name" value="Probable inorganic polyphosphate/atp-NAD kinase, domain 1"/>
    <property type="match status" value="1"/>
</dbReference>
<dbReference type="Gene3D" id="2.60.200.30">
    <property type="entry name" value="Probable inorganic polyphosphate/atp-NAD kinase, domain 2"/>
    <property type="match status" value="1"/>
</dbReference>
<dbReference type="HAMAP" id="MF_00361">
    <property type="entry name" value="NAD_kinase"/>
    <property type="match status" value="1"/>
</dbReference>
<dbReference type="InterPro" id="IPR017438">
    <property type="entry name" value="ATP-NAD_kinase_N"/>
</dbReference>
<dbReference type="InterPro" id="IPR017437">
    <property type="entry name" value="ATP-NAD_kinase_PpnK-typ_C"/>
</dbReference>
<dbReference type="InterPro" id="IPR016064">
    <property type="entry name" value="NAD/diacylglycerol_kinase_sf"/>
</dbReference>
<dbReference type="InterPro" id="IPR002504">
    <property type="entry name" value="NADK"/>
</dbReference>
<dbReference type="NCBIfam" id="NF003424">
    <property type="entry name" value="PRK04885.1"/>
    <property type="match status" value="1"/>
</dbReference>
<dbReference type="PANTHER" id="PTHR20275">
    <property type="entry name" value="NAD KINASE"/>
    <property type="match status" value="1"/>
</dbReference>
<dbReference type="PANTHER" id="PTHR20275:SF0">
    <property type="entry name" value="NAD KINASE"/>
    <property type="match status" value="1"/>
</dbReference>
<dbReference type="Pfam" id="PF01513">
    <property type="entry name" value="NAD_kinase"/>
    <property type="match status" value="1"/>
</dbReference>
<dbReference type="Pfam" id="PF20143">
    <property type="entry name" value="NAD_kinase_C"/>
    <property type="match status" value="1"/>
</dbReference>
<dbReference type="SUPFAM" id="SSF111331">
    <property type="entry name" value="NAD kinase/diacylglycerol kinase-like"/>
    <property type="match status" value="1"/>
</dbReference>
<comment type="function">
    <text evidence="1">Involved in the regulation of the intracellular balance of NAD and NADP, and is a key enzyme in the biosynthesis of NADP. Catalyzes specifically the phosphorylation on 2'-hydroxyl of the adenosine moiety of NAD to yield NADP.</text>
</comment>
<comment type="catalytic activity">
    <reaction evidence="1">
        <text>NAD(+) + ATP = ADP + NADP(+) + H(+)</text>
        <dbReference type="Rhea" id="RHEA:18629"/>
        <dbReference type="ChEBI" id="CHEBI:15378"/>
        <dbReference type="ChEBI" id="CHEBI:30616"/>
        <dbReference type="ChEBI" id="CHEBI:57540"/>
        <dbReference type="ChEBI" id="CHEBI:58349"/>
        <dbReference type="ChEBI" id="CHEBI:456216"/>
        <dbReference type="EC" id="2.7.1.23"/>
    </reaction>
</comment>
<comment type="cofactor">
    <cofactor evidence="1">
        <name>a divalent metal cation</name>
        <dbReference type="ChEBI" id="CHEBI:60240"/>
    </cofactor>
</comment>
<comment type="subcellular location">
    <subcellularLocation>
        <location evidence="1">Cytoplasm</location>
    </subcellularLocation>
</comment>
<comment type="similarity">
    <text evidence="1">Belongs to the NAD kinase family.</text>
</comment>